<organism>
    <name type="scientific">Saccharomyces cerevisiae (strain ATCC 204508 / S288c)</name>
    <name type="common">Baker's yeast</name>
    <dbReference type="NCBI Taxonomy" id="559292"/>
    <lineage>
        <taxon>Eukaryota</taxon>
        <taxon>Fungi</taxon>
        <taxon>Dikarya</taxon>
        <taxon>Ascomycota</taxon>
        <taxon>Saccharomycotina</taxon>
        <taxon>Saccharomycetes</taxon>
        <taxon>Saccharomycetales</taxon>
        <taxon>Saccharomycetaceae</taxon>
        <taxon>Saccharomyces</taxon>
    </lineage>
</organism>
<name>YG4U_YEAST</name>
<reference key="1">
    <citation type="journal article" date="1996" name="Yeast">
        <title>Sequence analysis of the 43 kb CRM1-YLM9-PET54-DIE2-SMI1-PHO81-YHB4-PFK1 region from the right arm of Saccharomyces cerevisiae chromosome VII.</title>
        <authorList>
            <person name="van der Aart Q.J.M."/>
            <person name="Kleine K."/>
            <person name="Steensma H.Y."/>
        </authorList>
    </citation>
    <scope>NUCLEOTIDE SEQUENCE [GENOMIC DNA]</scope>
    <source>
        <strain>ATCC 204508 / S288c</strain>
    </source>
</reference>
<reference key="2">
    <citation type="journal article" date="1997" name="Nature">
        <title>The nucleotide sequence of Saccharomyces cerevisiae chromosome VII.</title>
        <authorList>
            <person name="Tettelin H."/>
            <person name="Agostoni-Carbone M.L."/>
            <person name="Albermann K."/>
            <person name="Albers M."/>
            <person name="Arroyo J."/>
            <person name="Backes U."/>
            <person name="Barreiros T."/>
            <person name="Bertani I."/>
            <person name="Bjourson A.J."/>
            <person name="Brueckner M."/>
            <person name="Bruschi C.V."/>
            <person name="Carignani G."/>
            <person name="Castagnoli L."/>
            <person name="Cerdan E."/>
            <person name="Clemente M.L."/>
            <person name="Coblenz A."/>
            <person name="Coglievina M."/>
            <person name="Coissac E."/>
            <person name="Defoor E."/>
            <person name="Del Bino S."/>
            <person name="Delius H."/>
            <person name="Delneri D."/>
            <person name="de Wergifosse P."/>
            <person name="Dujon B."/>
            <person name="Durand P."/>
            <person name="Entian K.-D."/>
            <person name="Eraso P."/>
            <person name="Escribano V."/>
            <person name="Fabiani L."/>
            <person name="Fartmann B."/>
            <person name="Feroli F."/>
            <person name="Feuermann M."/>
            <person name="Frontali L."/>
            <person name="Garcia-Gonzalez M."/>
            <person name="Garcia-Saez M.I."/>
            <person name="Goffeau A."/>
            <person name="Guerreiro P."/>
            <person name="Hani J."/>
            <person name="Hansen M."/>
            <person name="Hebling U."/>
            <person name="Hernandez K."/>
            <person name="Heumann K."/>
            <person name="Hilger F."/>
            <person name="Hofmann B."/>
            <person name="Indge K.J."/>
            <person name="James C.M."/>
            <person name="Klima R."/>
            <person name="Koetter P."/>
            <person name="Kramer B."/>
            <person name="Kramer W."/>
            <person name="Lauquin G."/>
            <person name="Leuther H."/>
            <person name="Louis E.J."/>
            <person name="Maillier E."/>
            <person name="Marconi A."/>
            <person name="Martegani E."/>
            <person name="Mazon M.J."/>
            <person name="Mazzoni C."/>
            <person name="McReynolds A.D.K."/>
            <person name="Melchioretto P."/>
            <person name="Mewes H.-W."/>
            <person name="Minenkova O."/>
            <person name="Mueller-Auer S."/>
            <person name="Nawrocki A."/>
            <person name="Netter P."/>
            <person name="Neu R."/>
            <person name="Nombela C."/>
            <person name="Oliver S.G."/>
            <person name="Panzeri L."/>
            <person name="Paoluzi S."/>
            <person name="Plevani P."/>
            <person name="Portetelle D."/>
            <person name="Portillo F."/>
            <person name="Potier S."/>
            <person name="Purnelle B."/>
            <person name="Rieger M."/>
            <person name="Riles L."/>
            <person name="Rinaldi T."/>
            <person name="Robben J."/>
            <person name="Rodrigues-Pousada C."/>
            <person name="Rodriguez-Belmonte E."/>
            <person name="Rodriguez-Torres A.M."/>
            <person name="Rose M."/>
            <person name="Ruzzi M."/>
            <person name="Saliola M."/>
            <person name="Sanchez-Perez M."/>
            <person name="Schaefer B."/>
            <person name="Schaefer M."/>
            <person name="Scharfe M."/>
            <person name="Schmidheini T."/>
            <person name="Schreer A."/>
            <person name="Skala J."/>
            <person name="Souciet J.-L."/>
            <person name="Steensma H.Y."/>
            <person name="Talla E."/>
            <person name="Thierry A."/>
            <person name="Vandenbol M."/>
            <person name="van der Aart Q.J.M."/>
            <person name="Van Dyck L."/>
            <person name="Vanoni M."/>
            <person name="Verhasselt P."/>
            <person name="Voet M."/>
            <person name="Volckaert G."/>
            <person name="Wambutt R."/>
            <person name="Watson M.D."/>
            <person name="Weber N."/>
            <person name="Wedler E."/>
            <person name="Wedler H."/>
            <person name="Wipfli P."/>
            <person name="Wolf K."/>
            <person name="Wright L.F."/>
            <person name="Zaccaria P."/>
            <person name="Zimmermann M."/>
            <person name="Zollner A."/>
            <person name="Kleine K."/>
        </authorList>
    </citation>
    <scope>NUCLEOTIDE SEQUENCE [LARGE SCALE GENOMIC DNA]</scope>
    <source>
        <strain>ATCC 204508 / S288c</strain>
    </source>
</reference>
<reference key="3">
    <citation type="journal article" date="2014" name="G3 (Bethesda)">
        <title>The reference genome sequence of Saccharomyces cerevisiae: Then and now.</title>
        <authorList>
            <person name="Engel S.R."/>
            <person name="Dietrich F.S."/>
            <person name="Fisk D.G."/>
            <person name="Binkley G."/>
            <person name="Balakrishnan R."/>
            <person name="Costanzo M.C."/>
            <person name="Dwight S.S."/>
            <person name="Hitz B.C."/>
            <person name="Karra K."/>
            <person name="Nash R.S."/>
            <person name="Weng S."/>
            <person name="Wong E.D."/>
            <person name="Lloyd P."/>
            <person name="Skrzypek M.S."/>
            <person name="Miyasato S.R."/>
            <person name="Simison M."/>
            <person name="Cherry J.M."/>
        </authorList>
    </citation>
    <scope>GENOME REANNOTATION</scope>
    <source>
        <strain>ATCC 204508 / S288c</strain>
    </source>
</reference>
<reference key="4">
    <citation type="journal article" date="2007" name="Genome Res.">
        <title>Approaching a complete repository of sequence-verified protein-encoding clones for Saccharomyces cerevisiae.</title>
        <authorList>
            <person name="Hu Y."/>
            <person name="Rolfs A."/>
            <person name="Bhullar B."/>
            <person name="Murthy T.V.S."/>
            <person name="Zhu C."/>
            <person name="Berger M.F."/>
            <person name="Camargo A.A."/>
            <person name="Kelley F."/>
            <person name="McCarron S."/>
            <person name="Jepson D."/>
            <person name="Richardson A."/>
            <person name="Raphael J."/>
            <person name="Moreira D."/>
            <person name="Taycher E."/>
            <person name="Zuo D."/>
            <person name="Mohr S."/>
            <person name="Kane M.F."/>
            <person name="Williamson J."/>
            <person name="Simpson A.J.G."/>
            <person name="Bulyk M.L."/>
            <person name="Harlow E."/>
            <person name="Marsischky G."/>
            <person name="Kolodner R.D."/>
            <person name="LaBaer J."/>
        </authorList>
    </citation>
    <scope>NUCLEOTIDE SEQUENCE [GENOMIC DNA]</scope>
    <source>
        <strain>ATCC 204508 / S288c</strain>
    </source>
</reference>
<dbReference type="EMBL" id="X87941">
    <property type="protein sequence ID" value="CAA61177.1"/>
    <property type="molecule type" value="Genomic_DNA"/>
</dbReference>
<dbReference type="EMBL" id="Z73013">
    <property type="protein sequence ID" value="CAA97256.1"/>
    <property type="molecule type" value="Genomic_DNA"/>
</dbReference>
<dbReference type="EMBL" id="AY693335">
    <property type="protein sequence ID" value="AAT93354.1"/>
    <property type="molecule type" value="Genomic_DNA"/>
</dbReference>
<dbReference type="PIR" id="S57692">
    <property type="entry name" value="S57692"/>
</dbReference>
<dbReference type="DIP" id="DIP-4114N"/>
<dbReference type="MINT" id="P53308"/>
<dbReference type="STRING" id="4932.YGR228W"/>
<dbReference type="PaxDb" id="4932-YGR228W"/>
<dbReference type="EnsemblFungi" id="YGR228W_mRNA">
    <property type="protein sequence ID" value="YGR228W"/>
    <property type="gene ID" value="YGR228W"/>
</dbReference>
<dbReference type="AGR" id="SGD:S000003460"/>
<dbReference type="SGD" id="S000003460">
    <property type="gene designation" value="YGR228W"/>
</dbReference>
<dbReference type="HOGENOM" id="CLU_2122998_0_0_1"/>
<dbReference type="GO" id="GO:0016020">
    <property type="term" value="C:membrane"/>
    <property type="evidence" value="ECO:0007669"/>
    <property type="project" value="UniProtKB-SubCell"/>
</dbReference>
<keyword id="KW-0472">Membrane</keyword>
<keyword id="KW-0812">Transmembrane</keyword>
<keyword id="KW-1133">Transmembrane helix</keyword>
<feature type="chain" id="PRO_0000202850" description="Putative uncharacterized protein YGR228W">
    <location>
        <begin position="1"/>
        <end position="114"/>
    </location>
</feature>
<feature type="transmembrane region" description="Helical" evidence="1">
    <location>
        <begin position="21"/>
        <end position="41"/>
    </location>
</feature>
<feature type="transmembrane region" description="Helical" evidence="1">
    <location>
        <begin position="65"/>
        <end position="85"/>
    </location>
</feature>
<feature type="transmembrane region" description="Helical" evidence="1">
    <location>
        <begin position="93"/>
        <end position="113"/>
    </location>
</feature>
<comment type="subcellular location">
    <subcellularLocation>
        <location evidence="2">Membrane</location>
        <topology evidence="2">Multi-pass membrane protein</topology>
    </subcellularLocation>
</comment>
<comment type="miscellaneous">
    <text evidence="2">Almost completely overlaps SMI1.</text>
</comment>
<comment type="caution">
    <text evidence="3">Product of a dubious gene prediction unlikely to encode a functional protein. Because of that it is not part of the S.cerevisiae S288c complete/reference proteome set.</text>
</comment>
<protein>
    <recommendedName>
        <fullName>Putative uncharacterized protein YGR228W</fullName>
    </recommendedName>
</protein>
<evidence type="ECO:0000255" key="1"/>
<evidence type="ECO:0000305" key="2"/>
<evidence type="ECO:0000305" key="3">
    <source>
    </source>
</evidence>
<sequence>MLIVIFHKAIFSNSSLASSTLASSLLISFSSFLFISSVCLFTSSSFFADSVTCSFSTCSFSSTFGCFSSSFLSLSCLMSTLSALISCSACPRLSVFTVVVSASLGSVFTILTDS</sequence>
<accession>P53308</accession>
<gene>
    <name type="ordered locus">YGR228W</name>
</gene>
<proteinExistence type="uncertain"/>